<organism>
    <name type="scientific">Escherichia coli (strain K12 / DH10B)</name>
    <dbReference type="NCBI Taxonomy" id="316385"/>
    <lineage>
        <taxon>Bacteria</taxon>
        <taxon>Pseudomonadati</taxon>
        <taxon>Pseudomonadota</taxon>
        <taxon>Gammaproteobacteria</taxon>
        <taxon>Enterobacterales</taxon>
        <taxon>Enterobacteriaceae</taxon>
        <taxon>Escherichia</taxon>
    </lineage>
</organism>
<evidence type="ECO:0000255" key="1">
    <source>
        <dbReference type="HAMAP-Rule" id="MF_01187"/>
    </source>
</evidence>
<sequence length="60" mass="6855">MDHRLLEIIACPVCNGKLWYNQEKQELICKLDNLAFPLRDGIPVLLETEARVLTADESKS</sequence>
<feature type="chain" id="PRO_1000138306" description="UPF0434 protein YcaR">
    <location>
        <begin position="1"/>
        <end position="60"/>
    </location>
</feature>
<reference key="1">
    <citation type="journal article" date="2008" name="J. Bacteriol.">
        <title>The complete genome sequence of Escherichia coli DH10B: insights into the biology of a laboratory workhorse.</title>
        <authorList>
            <person name="Durfee T."/>
            <person name="Nelson R."/>
            <person name="Baldwin S."/>
            <person name="Plunkett G. III"/>
            <person name="Burland V."/>
            <person name="Mau B."/>
            <person name="Petrosino J.F."/>
            <person name="Qin X."/>
            <person name="Muzny D.M."/>
            <person name="Ayele M."/>
            <person name="Gibbs R.A."/>
            <person name="Csorgo B."/>
            <person name="Posfai G."/>
            <person name="Weinstock G.M."/>
            <person name="Blattner F.R."/>
        </authorList>
    </citation>
    <scope>NUCLEOTIDE SEQUENCE [LARGE SCALE GENOMIC DNA]</scope>
    <source>
        <strain>K12 / DH10B</strain>
    </source>
</reference>
<name>YCAR_ECODH</name>
<proteinExistence type="inferred from homology"/>
<dbReference type="EMBL" id="CP000948">
    <property type="protein sequence ID" value="ACB02117.1"/>
    <property type="molecule type" value="Genomic_DNA"/>
</dbReference>
<dbReference type="RefSeq" id="WP_000350058.1">
    <property type="nucleotide sequence ID" value="NC_010473.1"/>
</dbReference>
<dbReference type="SMR" id="B1X8M1"/>
<dbReference type="GeneID" id="93776498"/>
<dbReference type="KEGG" id="ecd:ECDH10B_0987"/>
<dbReference type="HOGENOM" id="CLU_155659_3_1_6"/>
<dbReference type="GO" id="GO:0005829">
    <property type="term" value="C:cytosol"/>
    <property type="evidence" value="ECO:0007669"/>
    <property type="project" value="TreeGrafter"/>
</dbReference>
<dbReference type="FunFam" id="2.20.25.10:FF:000002">
    <property type="entry name" value="UPF0434 protein YcaR"/>
    <property type="match status" value="1"/>
</dbReference>
<dbReference type="Gene3D" id="2.20.25.10">
    <property type="match status" value="1"/>
</dbReference>
<dbReference type="HAMAP" id="MF_01187">
    <property type="entry name" value="UPF0434"/>
    <property type="match status" value="1"/>
</dbReference>
<dbReference type="InterPro" id="IPR005651">
    <property type="entry name" value="Trm112-like"/>
</dbReference>
<dbReference type="NCBIfam" id="NF008806">
    <property type="entry name" value="PRK11827.1"/>
    <property type="match status" value="1"/>
</dbReference>
<dbReference type="PANTHER" id="PTHR33505:SF4">
    <property type="entry name" value="PROTEIN PREY, MITOCHONDRIAL"/>
    <property type="match status" value="1"/>
</dbReference>
<dbReference type="PANTHER" id="PTHR33505">
    <property type="entry name" value="ZGC:162634"/>
    <property type="match status" value="1"/>
</dbReference>
<dbReference type="Pfam" id="PF03966">
    <property type="entry name" value="Trm112p"/>
    <property type="match status" value="1"/>
</dbReference>
<dbReference type="SUPFAM" id="SSF158997">
    <property type="entry name" value="Trm112p-like"/>
    <property type="match status" value="1"/>
</dbReference>
<protein>
    <recommendedName>
        <fullName evidence="1">UPF0434 protein YcaR</fullName>
    </recommendedName>
</protein>
<comment type="similarity">
    <text evidence="1">Belongs to the UPF0434 family.</text>
</comment>
<gene>
    <name evidence="1" type="primary">ycaR</name>
    <name type="ordered locus">ECDH10B_0987</name>
</gene>
<accession>B1X8M1</accession>